<reference key="1">
    <citation type="journal article" date="2008" name="Proc. Natl. Acad. Sci. U.S.A.">
        <title>The genome of Clostridium kluyveri, a strict anaerobe with unique metabolic features.</title>
        <authorList>
            <person name="Seedorf H."/>
            <person name="Fricke W.F."/>
            <person name="Veith B."/>
            <person name="Brueggemann H."/>
            <person name="Liesegang H."/>
            <person name="Strittmatter A."/>
            <person name="Miethke M."/>
            <person name="Buckel W."/>
            <person name="Hinderberger J."/>
            <person name="Li F."/>
            <person name="Hagemeier C."/>
            <person name="Thauer R.K."/>
            <person name="Gottschalk G."/>
        </authorList>
    </citation>
    <scope>NUCLEOTIDE SEQUENCE [LARGE SCALE GENOMIC DNA]</scope>
    <source>
        <strain>ATCC 8527 / DSM 555 / NBRC 12016 / NCIMB 10680 / K1</strain>
    </source>
</reference>
<comment type="function">
    <text evidence="1">Catalyzes the conversion of uracil and 5-phospho-alpha-D-ribose 1-diphosphate (PRPP) to UMP and diphosphate.</text>
</comment>
<comment type="catalytic activity">
    <reaction evidence="1">
        <text>UMP + diphosphate = 5-phospho-alpha-D-ribose 1-diphosphate + uracil</text>
        <dbReference type="Rhea" id="RHEA:13017"/>
        <dbReference type="ChEBI" id="CHEBI:17568"/>
        <dbReference type="ChEBI" id="CHEBI:33019"/>
        <dbReference type="ChEBI" id="CHEBI:57865"/>
        <dbReference type="ChEBI" id="CHEBI:58017"/>
        <dbReference type="EC" id="2.4.2.9"/>
    </reaction>
</comment>
<comment type="cofactor">
    <cofactor evidence="1">
        <name>Mg(2+)</name>
        <dbReference type="ChEBI" id="CHEBI:18420"/>
    </cofactor>
    <text evidence="1">Binds 1 Mg(2+) ion per subunit. The magnesium is bound as Mg-PRPP.</text>
</comment>
<comment type="activity regulation">
    <text evidence="1">Allosterically activated by GTP.</text>
</comment>
<comment type="pathway">
    <text evidence="1">Pyrimidine metabolism; UMP biosynthesis via salvage pathway; UMP from uracil: step 1/1.</text>
</comment>
<comment type="similarity">
    <text evidence="1">Belongs to the UPRTase family.</text>
</comment>
<gene>
    <name evidence="1" type="primary">upp</name>
    <name type="ordered locus">CKL_3702</name>
</gene>
<proteinExistence type="inferred from homology"/>
<accession>A5N3J1</accession>
<feature type="chain" id="PRO_1000085625" description="Uracil phosphoribosyltransferase">
    <location>
        <begin position="1"/>
        <end position="209"/>
    </location>
</feature>
<feature type="binding site" evidence="1">
    <location>
        <position position="79"/>
    </location>
    <ligand>
        <name>5-phospho-alpha-D-ribose 1-diphosphate</name>
        <dbReference type="ChEBI" id="CHEBI:58017"/>
    </ligand>
</feature>
<feature type="binding site" evidence="1">
    <location>
        <position position="104"/>
    </location>
    <ligand>
        <name>5-phospho-alpha-D-ribose 1-diphosphate</name>
        <dbReference type="ChEBI" id="CHEBI:58017"/>
    </ligand>
</feature>
<feature type="binding site" evidence="1">
    <location>
        <begin position="131"/>
        <end position="139"/>
    </location>
    <ligand>
        <name>5-phospho-alpha-D-ribose 1-diphosphate</name>
        <dbReference type="ChEBI" id="CHEBI:58017"/>
    </ligand>
</feature>
<feature type="binding site" evidence="1">
    <location>
        <position position="194"/>
    </location>
    <ligand>
        <name>uracil</name>
        <dbReference type="ChEBI" id="CHEBI:17568"/>
    </ligand>
</feature>
<feature type="binding site" evidence="1">
    <location>
        <begin position="199"/>
        <end position="201"/>
    </location>
    <ligand>
        <name>uracil</name>
        <dbReference type="ChEBI" id="CHEBI:17568"/>
    </ligand>
</feature>
<feature type="binding site" evidence="1">
    <location>
        <position position="200"/>
    </location>
    <ligand>
        <name>5-phospho-alpha-D-ribose 1-diphosphate</name>
        <dbReference type="ChEBI" id="CHEBI:58017"/>
    </ligand>
</feature>
<organism>
    <name type="scientific">Clostridium kluyveri (strain ATCC 8527 / DSM 555 / NBRC 12016 / NCIMB 10680 / K1)</name>
    <dbReference type="NCBI Taxonomy" id="431943"/>
    <lineage>
        <taxon>Bacteria</taxon>
        <taxon>Bacillati</taxon>
        <taxon>Bacillota</taxon>
        <taxon>Clostridia</taxon>
        <taxon>Eubacteriales</taxon>
        <taxon>Clostridiaceae</taxon>
        <taxon>Clostridium</taxon>
    </lineage>
</organism>
<sequence length="209" mass="22822">MSKVTQITHPLILHKLALIRDKRTGSKDFRELVEEVAMLMAYEVTRNLQTEEVEIETPICNTTCKMLSGKKVAVVPILRAGLGMVGGMLKLIPAAKVGHIGLYRDETTLKPVEYFCKLPQDIGEREVIVTDPMLATGGSAIDAITMLKQKGAKNIRLMCLIAAEDGIKSVTEAHPDVDIYTAAIDKELNKNGYIVPGLGDAGDRLYGTK</sequence>
<protein>
    <recommendedName>
        <fullName evidence="1">Uracil phosphoribosyltransferase</fullName>
        <ecNumber evidence="1">2.4.2.9</ecNumber>
    </recommendedName>
    <alternativeName>
        <fullName evidence="1">UMP pyrophosphorylase</fullName>
    </alternativeName>
    <alternativeName>
        <fullName evidence="1">UPRTase</fullName>
    </alternativeName>
</protein>
<evidence type="ECO:0000255" key="1">
    <source>
        <dbReference type="HAMAP-Rule" id="MF_01218"/>
    </source>
</evidence>
<keyword id="KW-0021">Allosteric enzyme</keyword>
<keyword id="KW-0328">Glycosyltransferase</keyword>
<keyword id="KW-0342">GTP-binding</keyword>
<keyword id="KW-0460">Magnesium</keyword>
<keyword id="KW-0547">Nucleotide-binding</keyword>
<keyword id="KW-1185">Reference proteome</keyword>
<keyword id="KW-0808">Transferase</keyword>
<dbReference type="EC" id="2.4.2.9" evidence="1"/>
<dbReference type="EMBL" id="CP000673">
    <property type="protein sequence ID" value="EDK35687.1"/>
    <property type="molecule type" value="Genomic_DNA"/>
</dbReference>
<dbReference type="RefSeq" id="WP_012104020.1">
    <property type="nucleotide sequence ID" value="NC_009706.1"/>
</dbReference>
<dbReference type="SMR" id="A5N3J1"/>
<dbReference type="STRING" id="431943.CKL_3702"/>
<dbReference type="KEGG" id="ckl:CKL_3702"/>
<dbReference type="eggNOG" id="COG0035">
    <property type="taxonomic scope" value="Bacteria"/>
</dbReference>
<dbReference type="HOGENOM" id="CLU_067096_2_2_9"/>
<dbReference type="UniPathway" id="UPA00574">
    <property type="reaction ID" value="UER00636"/>
</dbReference>
<dbReference type="Proteomes" id="UP000002411">
    <property type="component" value="Chromosome"/>
</dbReference>
<dbReference type="GO" id="GO:0005525">
    <property type="term" value="F:GTP binding"/>
    <property type="evidence" value="ECO:0007669"/>
    <property type="project" value="UniProtKB-KW"/>
</dbReference>
<dbReference type="GO" id="GO:0000287">
    <property type="term" value="F:magnesium ion binding"/>
    <property type="evidence" value="ECO:0007669"/>
    <property type="project" value="UniProtKB-UniRule"/>
</dbReference>
<dbReference type="GO" id="GO:0004845">
    <property type="term" value="F:uracil phosphoribosyltransferase activity"/>
    <property type="evidence" value="ECO:0007669"/>
    <property type="project" value="UniProtKB-UniRule"/>
</dbReference>
<dbReference type="GO" id="GO:0044206">
    <property type="term" value="P:UMP salvage"/>
    <property type="evidence" value="ECO:0007669"/>
    <property type="project" value="UniProtKB-UniRule"/>
</dbReference>
<dbReference type="GO" id="GO:0006223">
    <property type="term" value="P:uracil salvage"/>
    <property type="evidence" value="ECO:0007669"/>
    <property type="project" value="InterPro"/>
</dbReference>
<dbReference type="CDD" id="cd06223">
    <property type="entry name" value="PRTases_typeI"/>
    <property type="match status" value="1"/>
</dbReference>
<dbReference type="FunFam" id="3.40.50.2020:FF:000003">
    <property type="entry name" value="Uracil phosphoribosyltransferase"/>
    <property type="match status" value="1"/>
</dbReference>
<dbReference type="Gene3D" id="3.40.50.2020">
    <property type="match status" value="1"/>
</dbReference>
<dbReference type="HAMAP" id="MF_01218_B">
    <property type="entry name" value="Upp_B"/>
    <property type="match status" value="1"/>
</dbReference>
<dbReference type="InterPro" id="IPR000836">
    <property type="entry name" value="PRibTrfase_dom"/>
</dbReference>
<dbReference type="InterPro" id="IPR029057">
    <property type="entry name" value="PRTase-like"/>
</dbReference>
<dbReference type="InterPro" id="IPR034332">
    <property type="entry name" value="Upp_B"/>
</dbReference>
<dbReference type="InterPro" id="IPR050054">
    <property type="entry name" value="UPRTase/APRTase"/>
</dbReference>
<dbReference type="InterPro" id="IPR005765">
    <property type="entry name" value="Ura_phspho_trans"/>
</dbReference>
<dbReference type="NCBIfam" id="NF001097">
    <property type="entry name" value="PRK00129.1"/>
    <property type="match status" value="1"/>
</dbReference>
<dbReference type="NCBIfam" id="TIGR01091">
    <property type="entry name" value="upp"/>
    <property type="match status" value="1"/>
</dbReference>
<dbReference type="PANTHER" id="PTHR32315">
    <property type="entry name" value="ADENINE PHOSPHORIBOSYLTRANSFERASE"/>
    <property type="match status" value="1"/>
</dbReference>
<dbReference type="PANTHER" id="PTHR32315:SF4">
    <property type="entry name" value="URACIL PHOSPHORIBOSYLTRANSFERASE, CHLOROPLASTIC"/>
    <property type="match status" value="1"/>
</dbReference>
<dbReference type="Pfam" id="PF14681">
    <property type="entry name" value="UPRTase"/>
    <property type="match status" value="1"/>
</dbReference>
<dbReference type="SUPFAM" id="SSF53271">
    <property type="entry name" value="PRTase-like"/>
    <property type="match status" value="1"/>
</dbReference>
<name>UPP_CLOK5</name>